<protein>
    <recommendedName>
        <fullName evidence="16">Palmitoyltransferase ZDHHC2</fullName>
        <ecNumber evidence="14">2.3.1.225</ecNumber>
    </recommendedName>
    <alternativeName>
        <fullName evidence="1">Acyltransferase ZDHHC2</fullName>
        <ecNumber evidence="1">2.3.1.-</ecNumber>
    </alternativeName>
    <alternativeName>
        <fullName>Reduced expression associated with metastasis protein</fullName>
        <shortName>Ream</shortName>
    </alternativeName>
    <alternativeName>
        <fullName>Reduced expression in cancer protein</fullName>
        <shortName>Rec</shortName>
    </alternativeName>
    <alternativeName>
        <fullName evidence="18">Zinc finger DHHC domain-containing protein 2</fullName>
        <shortName>DHHC-2</shortName>
    </alternativeName>
    <alternativeName>
        <fullName>Zinc finger protein 372</fullName>
    </alternativeName>
</protein>
<reference key="1">
    <citation type="journal article" date="2000" name="Genes Chromosomes Cancer">
        <title>Isolation of a novel gene on 8p21.3-22 whose expression is reduced significantly in human colorectal cancers with liver metastasis.</title>
        <authorList>
            <person name="Oyama T."/>
            <person name="Miyoshi Y."/>
            <person name="Koyama K."/>
            <person name="Nakagawa H."/>
            <person name="Yamori T."/>
            <person name="Ito T."/>
            <person name="Matsuda H."/>
            <person name="Arakawa H."/>
            <person name="Nakamura Y."/>
        </authorList>
    </citation>
    <scope>NUCLEOTIDE SEQUENCE [MRNA]</scope>
    <scope>TISSUE SPECIFICITY</scope>
    <scope>VARIANTS PHE-306 AND ILE-356</scope>
</reference>
<reference key="2">
    <citation type="submission" date="2005-09" db="EMBL/GenBank/DDBJ databases">
        <authorList>
            <person name="Mural R.J."/>
            <person name="Istrail S."/>
            <person name="Sutton G.G."/>
            <person name="Florea L."/>
            <person name="Halpern A.L."/>
            <person name="Mobarry C.M."/>
            <person name="Lippert R."/>
            <person name="Walenz B."/>
            <person name="Shatkay H."/>
            <person name="Dew I."/>
            <person name="Miller J.R."/>
            <person name="Flanigan M.J."/>
            <person name="Edwards N.J."/>
            <person name="Bolanos R."/>
            <person name="Fasulo D."/>
            <person name="Halldorsson B.V."/>
            <person name="Hannenhalli S."/>
            <person name="Turner R."/>
            <person name="Yooseph S."/>
            <person name="Lu F."/>
            <person name="Nusskern D.R."/>
            <person name="Shue B.C."/>
            <person name="Zheng X.H."/>
            <person name="Zhong F."/>
            <person name="Delcher A.L."/>
            <person name="Huson D.H."/>
            <person name="Kravitz S.A."/>
            <person name="Mouchard L."/>
            <person name="Reinert K."/>
            <person name="Remington K.A."/>
            <person name="Clark A.G."/>
            <person name="Waterman M.S."/>
            <person name="Eichler E.E."/>
            <person name="Adams M.D."/>
            <person name="Hunkapiller M.W."/>
            <person name="Myers E.W."/>
            <person name="Venter J.C."/>
        </authorList>
    </citation>
    <scope>NUCLEOTIDE SEQUENCE [LARGE SCALE GENOMIC DNA]</scope>
</reference>
<reference key="3">
    <citation type="journal article" date="2004" name="Genome Res.">
        <title>The status, quality, and expansion of the NIH full-length cDNA project: the Mammalian Gene Collection (MGC).</title>
        <authorList>
            <consortium name="The MGC Project Team"/>
        </authorList>
    </citation>
    <scope>NUCLEOTIDE SEQUENCE [LARGE SCALE MRNA]</scope>
    <source>
        <tissue>Brain</tissue>
        <tissue>Duodenum</tissue>
    </source>
</reference>
<reference key="4">
    <citation type="journal article" date="2008" name="Mol. Biol. Cell">
        <title>DHHC2 affects palmitoylation, stability, and functions of tetraspanins CD9 and CD151.</title>
        <authorList>
            <person name="Sharma C."/>
            <person name="Yang X.H."/>
            <person name="Hemler M.E."/>
        </authorList>
    </citation>
    <scope>FUNCTION</scope>
    <scope>SUBCELLULAR LOCATION</scope>
    <scope>PALMITOYLATION</scope>
    <scope>MUTAGENESIS OF 154-ASP-HIS-155 AND CYS-157</scope>
</reference>
<reference key="5">
    <citation type="journal article" date="2008" name="Mol. Cell. Proteomics">
        <title>Identification of CKAP4/p63 as a major substrate of the palmitoyl acyltransferase DHHC2, a putative tumor suppressor, using a novel proteomics method.</title>
        <authorList>
            <person name="Zhang J."/>
            <person name="Planey S.L."/>
            <person name="Ceballos C."/>
            <person name="Stevens S.M. Jr."/>
            <person name="Keay S.K."/>
            <person name="Zacharias D.A."/>
        </authorList>
    </citation>
    <scope>FUNCTION</scope>
</reference>
<reference key="6">
    <citation type="journal article" date="2009" name="Mol. Biol. Cell">
        <title>Palmitoylation of cytoskeleton associated protein 4 by DHHC2 regulates antiproliferative factor-mediated signaling.</title>
        <authorList>
            <person name="Planey S.L."/>
            <person name="Keay S.K."/>
            <person name="Zhang C.O."/>
            <person name="Zacharias D.A."/>
        </authorList>
    </citation>
    <scope>FUNCTION</scope>
</reference>
<reference key="7">
    <citation type="journal article" date="2011" name="J. Biol. Chem.">
        <title>Gi/o signaling and the palmitoyltransferase DHHC2 regulate palmitate cycling and shuttling of RGS7 family-binding protein.</title>
        <authorList>
            <person name="Jia L."/>
            <person name="Linder M.E."/>
            <person name="Blumer K.J."/>
        </authorList>
    </citation>
    <scope>FUNCTION</scope>
</reference>
<reference key="8">
    <citation type="journal article" date="2011" name="Mol. Biol. Cell">
        <title>The palmitoyl transferase DHHC2 targets a dynamic membrane cycling pathway: regulation by a C-terminal domain.</title>
        <authorList>
            <person name="Greaves J."/>
            <person name="Carmichael J.A."/>
            <person name="Chamberlain L.H."/>
        </authorList>
    </citation>
    <scope>SUBCELLULAR LOCATION</scope>
</reference>
<reference key="9">
    <citation type="journal article" date="2011" name="Mol. Membr. Biol.">
        <title>DHHC2 is a protein S-acyltransferase for Lck.</title>
        <authorList>
            <person name="Zeidman R."/>
            <person name="Buckland G."/>
            <person name="Cebecauer M."/>
            <person name="Eissmann P."/>
            <person name="Davis D.M."/>
            <person name="Magee A.I."/>
        </authorList>
    </citation>
    <scope>FUNCTION</scope>
    <scope>SUBCELLULAR LOCATION</scope>
    <scope>PALMITOYLATION</scope>
    <scope>TISSUE SPECIFICITY</scope>
</reference>
<reference key="10">
    <citation type="journal article" date="2013" name="J. Biol. Chem.">
        <title>Oligomerization of DHHC protein S-acyltransferases.</title>
        <authorList>
            <person name="Lai J."/>
            <person name="Linder M.E."/>
        </authorList>
    </citation>
    <scope>FUNCTION</scope>
    <scope>CATALYTIC ACTIVITY</scope>
    <scope>SUBUNIT</scope>
    <scope>MUTAGENESIS OF CYS-157</scope>
    <scope>ACTIVE SITE</scope>
</reference>
<reference key="11">
    <citation type="journal article" date="2013" name="J. Proteome Res.">
        <title>Toward a comprehensive characterization of a human cancer cell phosphoproteome.</title>
        <authorList>
            <person name="Zhou H."/>
            <person name="Di Palma S."/>
            <person name="Preisinger C."/>
            <person name="Peng M."/>
            <person name="Polat A.N."/>
            <person name="Heck A.J."/>
            <person name="Mohammed S."/>
        </authorList>
    </citation>
    <scope>PHOSPHORYLATION [LARGE SCALE ANALYSIS] AT SER-341</scope>
    <scope>IDENTIFICATION BY MASS SPECTROMETRY [LARGE SCALE ANALYSIS]</scope>
    <source>
        <tissue>Erythroleukemia</tissue>
    </source>
</reference>
<reference key="12">
    <citation type="journal article" date="2018" name="J. Virol.">
        <title>Fatty acid synthase promotes the palmitoylation of Chikungunya virus nsP1.</title>
        <authorList>
            <person name="Zhang N."/>
            <person name="Zhao H."/>
            <person name="Zhang L."/>
        </authorList>
    </citation>
    <scope>FUNCTION (MICROBIAL INFECTION)</scope>
</reference>
<evidence type="ECO:0000250" key="1">
    <source>
        <dbReference type="UniProtKB" id="P59267"/>
    </source>
</evidence>
<evidence type="ECO:0000250" key="2">
    <source>
        <dbReference type="UniProtKB" id="Q8IUH5"/>
    </source>
</evidence>
<evidence type="ECO:0000250" key="3">
    <source>
        <dbReference type="UniProtKB" id="Q9JKR5"/>
    </source>
</evidence>
<evidence type="ECO:0000255" key="4"/>
<evidence type="ECO:0000255" key="5">
    <source>
        <dbReference type="PROSITE-ProRule" id="PRU00067"/>
    </source>
</evidence>
<evidence type="ECO:0000256" key="6">
    <source>
        <dbReference type="SAM" id="MobiDB-lite"/>
    </source>
</evidence>
<evidence type="ECO:0000269" key="7">
    <source>
    </source>
</evidence>
<evidence type="ECO:0000269" key="8">
    <source>
    </source>
</evidence>
<evidence type="ECO:0000269" key="9">
    <source>
    </source>
</evidence>
<evidence type="ECO:0000269" key="10">
    <source>
    </source>
</evidence>
<evidence type="ECO:0000269" key="11">
    <source>
    </source>
</evidence>
<evidence type="ECO:0000269" key="12">
    <source>
    </source>
</evidence>
<evidence type="ECO:0000269" key="13">
    <source>
    </source>
</evidence>
<evidence type="ECO:0000269" key="14">
    <source>
    </source>
</evidence>
<evidence type="ECO:0000269" key="15">
    <source>
    </source>
</evidence>
<evidence type="ECO:0000305" key="16"/>
<evidence type="ECO:0000305" key="17">
    <source>
    </source>
</evidence>
<evidence type="ECO:0000312" key="18">
    <source>
        <dbReference type="HGNC" id="HGNC:18469"/>
    </source>
</evidence>
<evidence type="ECO:0007744" key="19">
    <source>
    </source>
</evidence>
<sequence length="367" mass="42022">MAPSGPGSSARRRCRRVLYWIPVVFITLLLGWSYYAYAIQLCIVSMENTGEQVVCLMAYHLLFAMFVWSYWKTIFTLPMNPSKEFHLSYAEKDLLEREPRGEAHQEVLRRAAKDLPIYTRTMSGAIRYCDRCQLIKPDRCHHCSVCDKCILKMDHHCPWVNNCVGFSNYKFFLLFLAYSLLYCLFIAATDLQYFIKFWTNGLPDTQAKFHIMFLFFAAAMFSVSLSSLFGYHCWLVSKNKSTLEAFRSPVFRHGTDKNGFSLGFSKNMRQVFGDEKKYWLLPIFSSLGDGCSFPTCLVNQDPEQASTPAGLNSTAKNLENHQFPAKPLRESQSHLLTDSQSWTESSINPGKCKAGMSNPALTMENET</sequence>
<proteinExistence type="evidence at protein level"/>
<feature type="chain" id="PRO_0000212859" description="Palmitoyltransferase ZDHHC2">
    <location>
        <begin position="1"/>
        <end position="367"/>
    </location>
</feature>
<feature type="topological domain" description="Cytoplasmic" evidence="16">
    <location>
        <begin position="1"/>
        <end position="16"/>
    </location>
</feature>
<feature type="transmembrane region" description="Helical" evidence="4">
    <location>
        <begin position="17"/>
        <end position="37"/>
    </location>
</feature>
<feature type="topological domain" description="Lumenal" evidence="16">
    <location>
        <begin position="38"/>
        <end position="54"/>
    </location>
</feature>
<feature type="transmembrane region" description="Helical" evidence="4">
    <location>
        <begin position="55"/>
        <end position="75"/>
    </location>
</feature>
<feature type="topological domain" description="Cytoplasmic" evidence="16">
    <location>
        <begin position="76"/>
        <end position="170"/>
    </location>
</feature>
<feature type="transmembrane region" description="Helical" evidence="4">
    <location>
        <begin position="171"/>
        <end position="191"/>
    </location>
</feature>
<feature type="topological domain" description="Lumenal" evidence="16">
    <location>
        <begin position="192"/>
        <end position="208"/>
    </location>
</feature>
<feature type="transmembrane region" description="Helical" evidence="4">
    <location>
        <begin position="209"/>
        <end position="229"/>
    </location>
</feature>
<feature type="topological domain" description="Cytoplasmic" evidence="16">
    <location>
        <begin position="230"/>
        <end position="367"/>
    </location>
</feature>
<feature type="domain" description="DHHC" evidence="5">
    <location>
        <begin position="127"/>
        <end position="177"/>
    </location>
</feature>
<feature type="region of interest" description="Mediates localization to plasma membrane and recycling endosomes" evidence="1">
    <location>
        <begin position="299"/>
        <end position="367"/>
    </location>
</feature>
<feature type="region of interest" description="Disordered" evidence="6">
    <location>
        <begin position="330"/>
        <end position="367"/>
    </location>
</feature>
<feature type="short sequence motif" description="Non-canonical dileucine endocytic signal" evidence="1">
    <location>
        <begin position="335"/>
        <end position="336"/>
    </location>
</feature>
<feature type="short sequence motif" description="NPxY-like endocytic signal" evidence="1">
    <location>
        <begin position="358"/>
        <end position="361"/>
    </location>
</feature>
<feature type="compositionally biased region" description="Polar residues" evidence="6">
    <location>
        <begin position="333"/>
        <end position="348"/>
    </location>
</feature>
<feature type="active site" description="S-palmitoyl cysteine intermediate" evidence="14">
    <location>
        <position position="157"/>
    </location>
</feature>
<feature type="modified residue" description="Phosphoserine" evidence="19">
    <location>
        <position position="341"/>
    </location>
</feature>
<feature type="sequence variant" id="VAR_015229" description="In a hepatocellular carcinoma sample; somatic mutation." evidence="7">
    <original>S</original>
    <variation>F</variation>
    <location>
        <position position="306"/>
    </location>
</feature>
<feature type="sequence variant" id="VAR_015230" description="In a colorectal cancer sample; somatic mutation; dbSNP:rs568589179." evidence="7">
    <original>M</original>
    <variation>I</variation>
    <location>
        <position position="356"/>
    </location>
</feature>
<feature type="mutagenesis site" description="Loss of protein-cysteine S-palmitoyltransferase activity." evidence="9">
    <original>DH</original>
    <variation>AA</variation>
    <location>
        <begin position="154"/>
        <end position="155"/>
    </location>
</feature>
<feature type="mutagenesis site" description="Loss of protein-cysteine S-palmitoyltransferase activity." evidence="9 14">
    <original>C</original>
    <variation>S</variation>
    <location>
        <position position="157"/>
    </location>
</feature>
<keyword id="KW-0012">Acyltransferase</keyword>
<keyword id="KW-1003">Cell membrane</keyword>
<keyword id="KW-0256">Endoplasmic reticulum</keyword>
<keyword id="KW-0967">Endosome</keyword>
<keyword id="KW-0333">Golgi apparatus</keyword>
<keyword id="KW-0449">Lipoprotein</keyword>
<keyword id="KW-0472">Membrane</keyword>
<keyword id="KW-0564">Palmitate</keyword>
<keyword id="KW-0597">Phosphoprotein</keyword>
<keyword id="KW-1267">Proteomics identification</keyword>
<keyword id="KW-1185">Reference proteome</keyword>
<keyword id="KW-0770">Synapse</keyword>
<keyword id="KW-0808">Transferase</keyword>
<keyword id="KW-0812">Transmembrane</keyword>
<keyword id="KW-1133">Transmembrane helix</keyword>
<name>ZDHC2_HUMAN</name>
<organism>
    <name type="scientific">Homo sapiens</name>
    <name type="common">Human</name>
    <dbReference type="NCBI Taxonomy" id="9606"/>
    <lineage>
        <taxon>Eukaryota</taxon>
        <taxon>Metazoa</taxon>
        <taxon>Chordata</taxon>
        <taxon>Craniata</taxon>
        <taxon>Vertebrata</taxon>
        <taxon>Euteleostomi</taxon>
        <taxon>Mammalia</taxon>
        <taxon>Eutheria</taxon>
        <taxon>Euarchontoglires</taxon>
        <taxon>Primates</taxon>
        <taxon>Haplorrhini</taxon>
        <taxon>Catarrhini</taxon>
        <taxon>Hominidae</taxon>
        <taxon>Homo</taxon>
    </lineage>
</organism>
<dbReference type="EC" id="2.3.1.225" evidence="14"/>
<dbReference type="EC" id="2.3.1.-" evidence="1"/>
<dbReference type="EMBL" id="AB023584">
    <property type="protein sequence ID" value="BAA88923.1"/>
    <property type="molecule type" value="mRNA"/>
</dbReference>
<dbReference type="EMBL" id="CH471080">
    <property type="protein sequence ID" value="EAW63824.1"/>
    <property type="molecule type" value="Genomic_DNA"/>
</dbReference>
<dbReference type="EMBL" id="CH471080">
    <property type="protein sequence ID" value="EAW63825.1"/>
    <property type="molecule type" value="Genomic_DNA"/>
</dbReference>
<dbReference type="EMBL" id="BC039253">
    <property type="protein sequence ID" value="AAH39253.1"/>
    <property type="molecule type" value="mRNA"/>
</dbReference>
<dbReference type="EMBL" id="BC050272">
    <property type="protein sequence ID" value="AAH50272.1"/>
    <property type="molecule type" value="mRNA"/>
</dbReference>
<dbReference type="CCDS" id="CCDS47810.1"/>
<dbReference type="RefSeq" id="NP_057437.1">
    <property type="nucleotide sequence ID" value="NM_016353.5"/>
</dbReference>
<dbReference type="SMR" id="Q9UIJ5"/>
<dbReference type="BioGRID" id="119374">
    <property type="interactions" value="7"/>
</dbReference>
<dbReference type="FunCoup" id="Q9UIJ5">
    <property type="interactions" value="1226"/>
</dbReference>
<dbReference type="IntAct" id="Q9UIJ5">
    <property type="interactions" value="3"/>
</dbReference>
<dbReference type="STRING" id="9606.ENSP00000262096"/>
<dbReference type="BindingDB" id="Q9UIJ5"/>
<dbReference type="ChEMBL" id="CHEMBL5169204"/>
<dbReference type="SwissLipids" id="SLP:000001951"/>
<dbReference type="iPTMnet" id="Q9UIJ5"/>
<dbReference type="PhosphoSitePlus" id="Q9UIJ5"/>
<dbReference type="SwissPalm" id="Q9UIJ5"/>
<dbReference type="BioMuta" id="ZDHHC2"/>
<dbReference type="DMDM" id="28202111"/>
<dbReference type="jPOST" id="Q9UIJ5"/>
<dbReference type="MassIVE" id="Q9UIJ5"/>
<dbReference type="PaxDb" id="9606-ENSP00000262096"/>
<dbReference type="PeptideAtlas" id="Q9UIJ5"/>
<dbReference type="ProteomicsDB" id="84534"/>
<dbReference type="Antibodypedia" id="22244">
    <property type="antibodies" value="120 antibodies from 24 providers"/>
</dbReference>
<dbReference type="DNASU" id="51201"/>
<dbReference type="Ensembl" id="ENST00000262096.13">
    <property type="protein sequence ID" value="ENSP00000262096.8"/>
    <property type="gene ID" value="ENSG00000104219.13"/>
</dbReference>
<dbReference type="GeneID" id="51201"/>
<dbReference type="KEGG" id="hsa:51201"/>
<dbReference type="MANE-Select" id="ENST00000262096.13">
    <property type="protein sequence ID" value="ENSP00000262096.8"/>
    <property type="RefSeq nucleotide sequence ID" value="NM_016353.5"/>
    <property type="RefSeq protein sequence ID" value="NP_057437.1"/>
</dbReference>
<dbReference type="UCSC" id="uc003wxe.4">
    <property type="organism name" value="human"/>
</dbReference>
<dbReference type="AGR" id="HGNC:18469"/>
<dbReference type="CTD" id="51201"/>
<dbReference type="DisGeNET" id="51201"/>
<dbReference type="GeneCards" id="ZDHHC2"/>
<dbReference type="HGNC" id="HGNC:18469">
    <property type="gene designation" value="ZDHHC2"/>
</dbReference>
<dbReference type="HPA" id="ENSG00000104219">
    <property type="expression patterns" value="Tissue enhanced (retina)"/>
</dbReference>
<dbReference type="MIM" id="618621">
    <property type="type" value="gene"/>
</dbReference>
<dbReference type="neXtProt" id="NX_Q9UIJ5"/>
<dbReference type="OpenTargets" id="ENSG00000104219"/>
<dbReference type="PharmGKB" id="PA38336"/>
<dbReference type="VEuPathDB" id="HostDB:ENSG00000104219"/>
<dbReference type="eggNOG" id="KOG1315">
    <property type="taxonomic scope" value="Eukaryota"/>
</dbReference>
<dbReference type="GeneTree" id="ENSGT00940000153716"/>
<dbReference type="HOGENOM" id="CLU_027721_1_3_1"/>
<dbReference type="InParanoid" id="Q9UIJ5"/>
<dbReference type="OMA" id="CFVVMHI"/>
<dbReference type="OrthoDB" id="9909019at2759"/>
<dbReference type="PAN-GO" id="Q9UIJ5">
    <property type="GO annotations" value="6 GO annotations based on evolutionary models"/>
</dbReference>
<dbReference type="PhylomeDB" id="Q9UIJ5"/>
<dbReference type="TreeFam" id="TF316044"/>
<dbReference type="BRENDA" id="2.3.1.225">
    <property type="organism ID" value="2681"/>
</dbReference>
<dbReference type="PathwayCommons" id="Q9UIJ5"/>
<dbReference type="Reactome" id="R-HSA-5683826">
    <property type="pathway name" value="Surfactant metabolism"/>
</dbReference>
<dbReference type="Reactome" id="R-HSA-9694548">
    <property type="pathway name" value="Maturation of spike protein"/>
</dbReference>
<dbReference type="SignaLink" id="Q9UIJ5"/>
<dbReference type="SIGNOR" id="Q9UIJ5"/>
<dbReference type="BioGRID-ORCS" id="51201">
    <property type="hits" value="11 hits in 1156 CRISPR screens"/>
</dbReference>
<dbReference type="ChiTaRS" id="ZDHHC2">
    <property type="organism name" value="human"/>
</dbReference>
<dbReference type="GeneWiki" id="ZDHHC2_(gene)"/>
<dbReference type="GenomeRNAi" id="51201"/>
<dbReference type="Pharos" id="Q9UIJ5">
    <property type="development level" value="Tbio"/>
</dbReference>
<dbReference type="PRO" id="PR:Q9UIJ5"/>
<dbReference type="Proteomes" id="UP000005640">
    <property type="component" value="Chromosome 8"/>
</dbReference>
<dbReference type="RNAct" id="Q9UIJ5">
    <property type="molecule type" value="protein"/>
</dbReference>
<dbReference type="Bgee" id="ENSG00000104219">
    <property type="expression patterns" value="Expressed in sperm and 196 other cell types or tissues"/>
</dbReference>
<dbReference type="ExpressionAtlas" id="Q9UIJ5">
    <property type="expression patterns" value="baseline and differential"/>
</dbReference>
<dbReference type="GO" id="GO:0005783">
    <property type="term" value="C:endoplasmic reticulum"/>
    <property type="evidence" value="ECO:0000314"/>
    <property type="project" value="UniProtKB"/>
</dbReference>
<dbReference type="GO" id="GO:0005789">
    <property type="term" value="C:endoplasmic reticulum membrane"/>
    <property type="evidence" value="ECO:0000314"/>
    <property type="project" value="UniProtKB"/>
</dbReference>
<dbReference type="GO" id="GO:0098978">
    <property type="term" value="C:glutamatergic synapse"/>
    <property type="evidence" value="ECO:0007669"/>
    <property type="project" value="Ensembl"/>
</dbReference>
<dbReference type="GO" id="GO:0005794">
    <property type="term" value="C:Golgi apparatus"/>
    <property type="evidence" value="ECO:0000314"/>
    <property type="project" value="UniProtKB"/>
</dbReference>
<dbReference type="GO" id="GO:0000139">
    <property type="term" value="C:Golgi membrane"/>
    <property type="evidence" value="ECO:0000304"/>
    <property type="project" value="Reactome"/>
</dbReference>
<dbReference type="GO" id="GO:0005886">
    <property type="term" value="C:plasma membrane"/>
    <property type="evidence" value="ECO:0000314"/>
    <property type="project" value="HPA"/>
</dbReference>
<dbReference type="GO" id="GO:0014069">
    <property type="term" value="C:postsynaptic density"/>
    <property type="evidence" value="ECO:0000250"/>
    <property type="project" value="UniProtKB"/>
</dbReference>
<dbReference type="GO" id="GO:0098837">
    <property type="term" value="C:postsynaptic recycling endosome"/>
    <property type="evidence" value="ECO:0000315"/>
    <property type="project" value="UniProt"/>
</dbReference>
<dbReference type="GO" id="GO:0098944">
    <property type="term" value="C:postsynaptic recycling endosome membrane"/>
    <property type="evidence" value="ECO:0007669"/>
    <property type="project" value="UniProtKB-SubCell"/>
</dbReference>
<dbReference type="GO" id="GO:0055038">
    <property type="term" value="C:recycling endosome membrane"/>
    <property type="evidence" value="ECO:0007669"/>
    <property type="project" value="Ensembl"/>
</dbReference>
<dbReference type="GO" id="GO:0016409">
    <property type="term" value="F:palmitoyltransferase activity"/>
    <property type="evidence" value="ECO:0000314"/>
    <property type="project" value="UniProtKB"/>
</dbReference>
<dbReference type="GO" id="GO:0042803">
    <property type="term" value="F:protein homodimerization activity"/>
    <property type="evidence" value="ECO:0000314"/>
    <property type="project" value="UniProtKB"/>
</dbReference>
<dbReference type="GO" id="GO:0019705">
    <property type="term" value="F:protein-cysteine S-myristoyltransferase activity"/>
    <property type="evidence" value="ECO:0007669"/>
    <property type="project" value="Ensembl"/>
</dbReference>
<dbReference type="GO" id="GO:0019706">
    <property type="term" value="F:protein-cysteine S-palmitoyltransferase activity"/>
    <property type="evidence" value="ECO:0000314"/>
    <property type="project" value="UniProtKB"/>
</dbReference>
<dbReference type="GO" id="GO:0140439">
    <property type="term" value="F:protein-cysteine S-stearoyltransferase activity"/>
    <property type="evidence" value="ECO:0007669"/>
    <property type="project" value="Ensembl"/>
</dbReference>
<dbReference type="GO" id="GO:0018230">
    <property type="term" value="P:peptidyl-L-cysteine S-palmitoylation"/>
    <property type="evidence" value="ECO:0000314"/>
    <property type="project" value="UniProtKB"/>
</dbReference>
<dbReference type="GO" id="GO:1904719">
    <property type="term" value="P:positive regulation of AMPA glutamate receptor clustering"/>
    <property type="evidence" value="ECO:0000250"/>
    <property type="project" value="UniProtKB"/>
</dbReference>
<dbReference type="GO" id="GO:1905751">
    <property type="term" value="P:positive regulation of endosome to plasma membrane protein transport"/>
    <property type="evidence" value="ECO:0000250"/>
    <property type="project" value="UniProtKB"/>
</dbReference>
<dbReference type="GO" id="GO:1900273">
    <property type="term" value="P:positive regulation of long-term synaptic potentiation"/>
    <property type="evidence" value="ECO:0000250"/>
    <property type="project" value="UniProtKB"/>
</dbReference>
<dbReference type="GO" id="GO:1903044">
    <property type="term" value="P:protein localization to membrane raft"/>
    <property type="evidence" value="ECO:0000315"/>
    <property type="project" value="UniProt"/>
</dbReference>
<dbReference type="GO" id="GO:0072659">
    <property type="term" value="P:protein localization to plasma membrane"/>
    <property type="evidence" value="ECO:0000250"/>
    <property type="project" value="UniProtKB"/>
</dbReference>
<dbReference type="GO" id="GO:1903539">
    <property type="term" value="P:protein localization to postsynaptic membrane"/>
    <property type="evidence" value="ECO:0000250"/>
    <property type="project" value="UniProtKB"/>
</dbReference>
<dbReference type="GO" id="GO:0018345">
    <property type="term" value="P:protein palmitoylation"/>
    <property type="evidence" value="ECO:0000314"/>
    <property type="project" value="UniProtKB"/>
</dbReference>
<dbReference type="GO" id="GO:0006612">
    <property type="term" value="P:protein targeting to membrane"/>
    <property type="evidence" value="ECO:0000318"/>
    <property type="project" value="GO_Central"/>
</dbReference>
<dbReference type="GO" id="GO:0022407">
    <property type="term" value="P:regulation of cell-cell adhesion"/>
    <property type="evidence" value="ECO:0000315"/>
    <property type="project" value="UniProtKB"/>
</dbReference>
<dbReference type="GO" id="GO:0048168">
    <property type="term" value="P:regulation of neuronal synaptic plasticity"/>
    <property type="evidence" value="ECO:0000250"/>
    <property type="project" value="UniProtKB"/>
</dbReference>
<dbReference type="GO" id="GO:0150054">
    <property type="term" value="P:regulation of postsynaptic neurotransmitter receptor diffusion trapping"/>
    <property type="evidence" value="ECO:0007669"/>
    <property type="project" value="Ensembl"/>
</dbReference>
<dbReference type="GO" id="GO:0042176">
    <property type="term" value="P:regulation of protein catabolic process"/>
    <property type="evidence" value="ECO:0000315"/>
    <property type="project" value="UniProtKB"/>
</dbReference>
<dbReference type="GO" id="GO:1903076">
    <property type="term" value="P:regulation of protein localization to plasma membrane"/>
    <property type="evidence" value="ECO:0000315"/>
    <property type="project" value="UniProtKB"/>
</dbReference>
<dbReference type="GO" id="GO:0007416">
    <property type="term" value="P:synapse assembly"/>
    <property type="evidence" value="ECO:0000315"/>
    <property type="project" value="UniProt"/>
</dbReference>
<dbReference type="GO" id="GO:0016188">
    <property type="term" value="P:synaptic vesicle maturation"/>
    <property type="evidence" value="ECO:0000318"/>
    <property type="project" value="GO_Central"/>
</dbReference>
<dbReference type="InterPro" id="IPR001594">
    <property type="entry name" value="Palmitoyltrfase_DHHC"/>
</dbReference>
<dbReference type="InterPro" id="IPR039859">
    <property type="entry name" value="PFA4/ZDH16/20/ERF2-like"/>
</dbReference>
<dbReference type="PANTHER" id="PTHR12246">
    <property type="entry name" value="PALMITOYLTRANSFERASE ZDHHC16"/>
    <property type="match status" value="1"/>
</dbReference>
<dbReference type="Pfam" id="PF01529">
    <property type="entry name" value="DHHC"/>
    <property type="match status" value="1"/>
</dbReference>
<dbReference type="PROSITE" id="PS50216">
    <property type="entry name" value="DHHC"/>
    <property type="match status" value="1"/>
</dbReference>
<comment type="function">
    <text evidence="1 3 8 9 10 11 13 14">Palmitoyltransferase that catalyzes the addition of palmitate onto various protein substrates and is involved in a variety of cellular processes (PubMed:18296695, PubMed:18508921, PubMed:19144824, PubMed:21343290, PubMed:22034844, PubMed:23793055). Has no stringent fatty acid selectivity and in addition to palmitate can also transfer onto target proteins myristate from tetradecanoyl-CoA and stearate from octadecanoyl-CoA (By similarity). In the nervous system, plays a role in long term synaptic potentiation by palmitoylating AKAP5 through which it regulates protein trafficking from the dendritic recycling endosomes to the plasma membrane and controls both structural and functional plasticity at excitatory synapses (By similarity). In dendrites, mediates the palmitoylation of DLG4 when synaptic activity decreases and induces synaptic clustering of DLG4 and associated AMPA-type glutamate receptors (By similarity). Also mediates the de novo and turnover palmitoylation of RGS7BP, a shuttle for Gi/o-specific GTPase-activating proteins/GAPs, promoting its localization to the plasma membrane in response to the activation of G protein-coupled receptors. Through the localization of these GTPase-activating proteins/GAPs, it also probably plays a role in G protein-coupled receptors signaling in neurons (By similarity). Also probably plays a role in cell adhesion by palmitoylating CD9 and CD151 to regulate their expression and function (PubMed:18508921). Palmitoylates the endoplasmic reticulum protein CKAP4 and regulates its localization to the plasma membrane (PubMed:18296695, PubMed:19144824). Could also palmitoylate LCK and regulate its localization to the plasma membrane (PubMed:22034844).</text>
</comment>
<comment type="function">
    <text evidence="15">(Microbial infection) Promotes Chikungunya virus (CHIKV) replication by mediating viral nsp1 palmitoylation.</text>
</comment>
<comment type="catalytic activity">
    <reaction evidence="14">
        <text>L-cysteinyl-[protein] + hexadecanoyl-CoA = S-hexadecanoyl-L-cysteinyl-[protein] + CoA</text>
        <dbReference type="Rhea" id="RHEA:36683"/>
        <dbReference type="Rhea" id="RHEA-COMP:10131"/>
        <dbReference type="Rhea" id="RHEA-COMP:11032"/>
        <dbReference type="ChEBI" id="CHEBI:29950"/>
        <dbReference type="ChEBI" id="CHEBI:57287"/>
        <dbReference type="ChEBI" id="CHEBI:57379"/>
        <dbReference type="ChEBI" id="CHEBI:74151"/>
        <dbReference type="EC" id="2.3.1.225"/>
    </reaction>
    <physiologicalReaction direction="left-to-right" evidence="17">
        <dbReference type="Rhea" id="RHEA:36684"/>
    </physiologicalReaction>
</comment>
<comment type="catalytic activity">
    <reaction evidence="1">
        <text>L-cysteinyl-[protein] + tetradecanoyl-CoA = S-tetradecanoyl-L-cysteinyl-[protein] + CoA</text>
        <dbReference type="Rhea" id="RHEA:59736"/>
        <dbReference type="Rhea" id="RHEA-COMP:10131"/>
        <dbReference type="Rhea" id="RHEA-COMP:15433"/>
        <dbReference type="ChEBI" id="CHEBI:29950"/>
        <dbReference type="ChEBI" id="CHEBI:57287"/>
        <dbReference type="ChEBI" id="CHEBI:57385"/>
        <dbReference type="ChEBI" id="CHEBI:143199"/>
    </reaction>
    <physiologicalReaction direction="left-to-right" evidence="1">
        <dbReference type="Rhea" id="RHEA:59737"/>
    </physiologicalReaction>
</comment>
<comment type="catalytic activity">
    <reaction evidence="1">
        <text>L-cysteinyl-[protein] + octadecanoyl-CoA = S-octadecanoyl-L-cysteinyl-[protein] + CoA</text>
        <dbReference type="Rhea" id="RHEA:59740"/>
        <dbReference type="Rhea" id="RHEA-COMP:10131"/>
        <dbReference type="Rhea" id="RHEA-COMP:15434"/>
        <dbReference type="ChEBI" id="CHEBI:29950"/>
        <dbReference type="ChEBI" id="CHEBI:57287"/>
        <dbReference type="ChEBI" id="CHEBI:57394"/>
        <dbReference type="ChEBI" id="CHEBI:143200"/>
    </reaction>
    <physiologicalReaction direction="left-to-right" evidence="1">
        <dbReference type="Rhea" id="RHEA:59741"/>
    </physiologicalReaction>
</comment>
<comment type="subunit">
    <text evidence="14">Monomer (PubMed:23793055). Homodimer (PubMed:23793055). The monomeric form has a higher catalytic activity (PubMed:23793055).</text>
</comment>
<comment type="subcellular location">
    <subcellularLocation>
        <location evidence="3">Postsynaptic density</location>
    </subcellularLocation>
    <subcellularLocation>
        <location evidence="1">Postsynaptic recycling endosome membrane</location>
        <topology evidence="4">Multi-pass membrane protein</topology>
    </subcellularLocation>
    <subcellularLocation>
        <location evidence="12">Cell membrane</location>
        <topology evidence="4">Multi-pass membrane protein</topology>
    </subcellularLocation>
    <subcellularLocation>
        <location evidence="13">Endoplasmic reticulum membrane</location>
        <topology evidence="4">Multi-pass membrane protein</topology>
    </subcellularLocation>
    <subcellularLocation>
        <location evidence="9 13">Golgi apparatus membrane</location>
        <topology evidence="4">Multi-pass membrane protein</topology>
    </subcellularLocation>
    <text evidence="3">Translocates to postsynaptic density when synaptic activity decreases.</text>
</comment>
<comment type="tissue specificity">
    <text evidence="7 13">Ubiquitously expressed (PubMed:10918388, PubMed:22034844). Reduced expression in colorectal cancers with liver metastasis (PubMed:10918388).</text>
</comment>
<comment type="domain">
    <text evidence="2">The DHHC domain is required for palmitoyltransferase activity.</text>
</comment>
<comment type="PTM">
    <text evidence="9 13">Autopalmitoylated.</text>
</comment>
<comment type="similarity">
    <text evidence="16">Belongs to the DHHC palmitoyltransferase family.</text>
</comment>
<accession>Q9UIJ5</accession>
<accession>D3DSP5</accession>
<gene>
    <name evidence="18" type="primary">ZDHHC2</name>
    <name type="synonym">REAM</name>
    <name type="synonym">REC</name>
    <name type="synonym">ZNF372</name>
</gene>